<feature type="chain" id="PRO_0000337627" description="3-(3-hydroxy-phenyl)propionate/3-hydroxycinnamic acid hydroxylase 1">
    <location>
        <begin position="1"/>
        <end position="615"/>
    </location>
</feature>
<feature type="region of interest" description="Disordered" evidence="2">
    <location>
        <begin position="1"/>
        <end position="20"/>
    </location>
</feature>
<feature type="binding site" evidence="1">
    <location>
        <begin position="27"/>
        <end position="56"/>
    </location>
    <ligand>
        <name>FAD</name>
        <dbReference type="ChEBI" id="CHEBI:57692"/>
    </ligand>
</feature>
<feature type="binding site" evidence="1">
    <location>
        <begin position="294"/>
        <end position="304"/>
    </location>
    <ligand>
        <name>FAD</name>
        <dbReference type="ChEBI" id="CHEBI:57692"/>
    </ligand>
</feature>
<evidence type="ECO:0000255" key="1">
    <source>
        <dbReference type="HAMAP-Rule" id="MF_01652"/>
    </source>
</evidence>
<evidence type="ECO:0000256" key="2">
    <source>
        <dbReference type="SAM" id="MobiDB-lite"/>
    </source>
</evidence>
<sequence length="615" mass="67814">MRPAFEPAAGLGRAHPHETTPRSIDADVAIIGAGPVGLMIANILGLQGVRVVVVEKLTQIIDYPRAIGLDDEALRVFQSVGLAEALLPHTTPNHWMRFTLNGKCFASIEPRTDEFGWPRRNAFIQPLADQILYRGLERFDHVSTLLGHNVDRFAQDESGVTIDATDAHGVRTTIRAAYMVGADGGNSFVRRTLDVPFEGRTKPNQWIVIDVRNDPIGSPHVYLHCDARRPYVSAALPHGIRRFEFMVMPGETEEELSKPENMAALVRGVVDDPDKVDYIRQRVYTHNARLASVFRVKRILLAGDAAHIMPVWQGQGYNSGIRDASNLGWKLAMVVKGTARDALLDTYTMERRAHARSMIHLSEVAGDIFAPTSFVGTRVRDAFVRCFDVLPSLKRYFVEMRFKPMPRYEDGVVLLARRARSEGMLARLIASRGHGAFGRLVGLMSEKRESLLGRIVHGRDAQAGTPVGRMYIQPRVRVADGSIVRLDDAIGNRFAILSWGTDPTFGLTPEARRIWSALGGCFVLAKPDPQLGFRDDVPEDVIAIGDVDSRLRDWFARVPESVVLLRPDRFVAGMCSPQCVSECVSQLAQRLSLSVATGAQADDATFAPAAGLVGA</sequence>
<name>MHPA1_BURVG</name>
<organism>
    <name type="scientific">Burkholderia vietnamiensis (strain G4 / LMG 22486)</name>
    <name type="common">Burkholderia cepacia (strain R1808)</name>
    <dbReference type="NCBI Taxonomy" id="269482"/>
    <lineage>
        <taxon>Bacteria</taxon>
        <taxon>Pseudomonadati</taxon>
        <taxon>Pseudomonadota</taxon>
        <taxon>Betaproteobacteria</taxon>
        <taxon>Burkholderiales</taxon>
        <taxon>Burkholderiaceae</taxon>
        <taxon>Burkholderia</taxon>
        <taxon>Burkholderia cepacia complex</taxon>
    </lineage>
</organism>
<comment type="function">
    <text evidence="1">Catalyzes the insertion of one atom of molecular oxygen into position 2 of the phenyl ring of 3-(3-hydroxyphenyl)propionate (3-HPP) and hydroxycinnamic acid (3HCI).</text>
</comment>
<comment type="catalytic activity">
    <reaction evidence="1">
        <text>3-(3-hydroxyphenyl)propanoate + NADH + O2 + H(+) = 3-(2,3-dihydroxyphenyl)propanoate + NAD(+) + H2O</text>
        <dbReference type="Rhea" id="RHEA:24785"/>
        <dbReference type="ChEBI" id="CHEBI:15377"/>
        <dbReference type="ChEBI" id="CHEBI:15378"/>
        <dbReference type="ChEBI" id="CHEBI:15379"/>
        <dbReference type="ChEBI" id="CHEBI:46951"/>
        <dbReference type="ChEBI" id="CHEBI:57277"/>
        <dbReference type="ChEBI" id="CHEBI:57540"/>
        <dbReference type="ChEBI" id="CHEBI:57945"/>
        <dbReference type="EC" id="1.14.13.127"/>
    </reaction>
</comment>
<comment type="catalytic activity">
    <reaction evidence="1">
        <text>(2E)-3-(3-hydroxyphenyl)prop-2-enoate + NADH + O2 + H(+) = (2E)-3-(2,3-dihydroxyphenyl)prop-2-enoate + NAD(+) + H2O</text>
        <dbReference type="Rhea" id="RHEA:27846"/>
        <dbReference type="ChEBI" id="CHEBI:15377"/>
        <dbReference type="ChEBI" id="CHEBI:15378"/>
        <dbReference type="ChEBI" id="CHEBI:15379"/>
        <dbReference type="ChEBI" id="CHEBI:47928"/>
        <dbReference type="ChEBI" id="CHEBI:57540"/>
        <dbReference type="ChEBI" id="CHEBI:57945"/>
        <dbReference type="ChEBI" id="CHEBI:58642"/>
        <dbReference type="EC" id="1.14.13.127"/>
    </reaction>
</comment>
<comment type="cofactor">
    <cofactor evidence="1">
        <name>FAD</name>
        <dbReference type="ChEBI" id="CHEBI:57692"/>
    </cofactor>
</comment>
<comment type="pathway">
    <text evidence="1">Aromatic compound metabolism; 3-phenylpropanoate degradation.</text>
</comment>
<comment type="similarity">
    <text evidence="1">Belongs to the PheA/TfdB FAD monooxygenase family.</text>
</comment>
<keyword id="KW-0058">Aromatic hydrocarbons catabolism</keyword>
<keyword id="KW-0274">FAD</keyword>
<keyword id="KW-0285">Flavoprotein</keyword>
<keyword id="KW-0520">NAD</keyword>
<keyword id="KW-0560">Oxidoreductase</keyword>
<gene>
    <name evidence="1" type="primary">mhpA1</name>
    <name type="ordered locus">Bcep1808_5388</name>
</gene>
<accession>A4JPY1</accession>
<proteinExistence type="inferred from homology"/>
<protein>
    <recommendedName>
        <fullName evidence="1">3-(3-hydroxy-phenyl)propionate/3-hydroxycinnamic acid hydroxylase 1</fullName>
        <shortName evidence="1">3-HCI hydroxylase 1</shortName>
        <shortName evidence="1">3-HPP hydroxylase 1</shortName>
        <ecNumber evidence="1">1.14.13.127</ecNumber>
    </recommendedName>
</protein>
<reference key="1">
    <citation type="submission" date="2007-03" db="EMBL/GenBank/DDBJ databases">
        <title>Complete sequence of chromosome 2 of Burkholderia vietnamiensis G4.</title>
        <authorList>
            <consortium name="US DOE Joint Genome Institute"/>
            <person name="Copeland A."/>
            <person name="Lucas S."/>
            <person name="Lapidus A."/>
            <person name="Barry K."/>
            <person name="Detter J.C."/>
            <person name="Glavina del Rio T."/>
            <person name="Hammon N."/>
            <person name="Israni S."/>
            <person name="Dalin E."/>
            <person name="Tice H."/>
            <person name="Pitluck S."/>
            <person name="Chain P."/>
            <person name="Malfatti S."/>
            <person name="Shin M."/>
            <person name="Vergez L."/>
            <person name="Schmutz J."/>
            <person name="Larimer F."/>
            <person name="Land M."/>
            <person name="Hauser L."/>
            <person name="Kyrpides N."/>
            <person name="Tiedje J."/>
            <person name="Richardson P."/>
        </authorList>
    </citation>
    <scope>NUCLEOTIDE SEQUENCE [LARGE SCALE GENOMIC DNA]</scope>
    <source>
        <strain>G4 / LMG 22486</strain>
    </source>
</reference>
<dbReference type="EC" id="1.14.13.127" evidence="1"/>
<dbReference type="EMBL" id="CP000615">
    <property type="protein sequence ID" value="ABO58334.1"/>
    <property type="molecule type" value="Genomic_DNA"/>
</dbReference>
<dbReference type="SMR" id="A4JPY1"/>
<dbReference type="KEGG" id="bvi:Bcep1808_5388"/>
<dbReference type="eggNOG" id="COG0654">
    <property type="taxonomic scope" value="Bacteria"/>
</dbReference>
<dbReference type="HOGENOM" id="CLU_009665_20_2_4"/>
<dbReference type="UniPathway" id="UPA00714"/>
<dbReference type="Proteomes" id="UP000002287">
    <property type="component" value="Chromosome 2"/>
</dbReference>
<dbReference type="GO" id="GO:0008688">
    <property type="term" value="F:3-(3-hydroxyphenyl)propionate hydroxylase activity"/>
    <property type="evidence" value="ECO:0007669"/>
    <property type="project" value="UniProtKB-UniRule"/>
</dbReference>
<dbReference type="GO" id="GO:0071949">
    <property type="term" value="F:FAD binding"/>
    <property type="evidence" value="ECO:0007669"/>
    <property type="project" value="InterPro"/>
</dbReference>
<dbReference type="GO" id="GO:0019622">
    <property type="term" value="P:3-(3-hydroxy)phenylpropionate catabolic process"/>
    <property type="evidence" value="ECO:0007669"/>
    <property type="project" value="UniProtKB-UniRule"/>
</dbReference>
<dbReference type="GO" id="GO:0019380">
    <property type="term" value="P:3-phenylpropionate catabolic process"/>
    <property type="evidence" value="ECO:0007669"/>
    <property type="project" value="UniProtKB-UniPathway"/>
</dbReference>
<dbReference type="Gene3D" id="3.30.70.2450">
    <property type="match status" value="1"/>
</dbReference>
<dbReference type="Gene3D" id="3.50.50.60">
    <property type="entry name" value="FAD/NAD(P)-binding domain"/>
    <property type="match status" value="1"/>
</dbReference>
<dbReference type="HAMAP" id="MF_01652">
    <property type="entry name" value="MhpA"/>
    <property type="match status" value="1"/>
</dbReference>
<dbReference type="InterPro" id="IPR023786">
    <property type="entry name" value="3-HPP/3HCI_hydroxylase"/>
</dbReference>
<dbReference type="InterPro" id="IPR002938">
    <property type="entry name" value="FAD-bd"/>
</dbReference>
<dbReference type="InterPro" id="IPR036188">
    <property type="entry name" value="FAD/NAD-bd_sf"/>
</dbReference>
<dbReference type="InterPro" id="IPR050631">
    <property type="entry name" value="PheA/TfdB_FAD_monoxygenase"/>
</dbReference>
<dbReference type="NCBIfam" id="NF004830">
    <property type="entry name" value="PRK06183.1-4"/>
    <property type="match status" value="1"/>
</dbReference>
<dbReference type="PANTHER" id="PTHR43476">
    <property type="entry name" value="3-(3-HYDROXY-PHENYL)PROPIONATE/3-HYDROXYCINNAMIC ACID HYDROXYLASE"/>
    <property type="match status" value="1"/>
</dbReference>
<dbReference type="PANTHER" id="PTHR43476:SF3">
    <property type="entry name" value="FAD-BINDING MONOOXYGENASE"/>
    <property type="match status" value="1"/>
</dbReference>
<dbReference type="Pfam" id="PF01494">
    <property type="entry name" value="FAD_binding_3"/>
    <property type="match status" value="1"/>
</dbReference>
<dbReference type="PRINTS" id="PR00420">
    <property type="entry name" value="RNGMNOXGNASE"/>
</dbReference>
<dbReference type="SUPFAM" id="SSF51905">
    <property type="entry name" value="FAD/NAD(P)-binding domain"/>
    <property type="match status" value="1"/>
</dbReference>